<gene>
    <name evidence="1" type="primary">kynA</name>
    <name type="ordered locus">TM1040_2226</name>
</gene>
<feature type="chain" id="PRO_0000360136" description="Tryptophan 2,3-dioxygenase">
    <location>
        <begin position="1"/>
        <end position="279"/>
    </location>
</feature>
<feature type="binding site" evidence="1">
    <location>
        <begin position="48"/>
        <end position="52"/>
    </location>
    <ligand>
        <name>substrate</name>
    </ligand>
</feature>
<feature type="binding site" evidence="1">
    <location>
        <position position="110"/>
    </location>
    <ligand>
        <name>substrate</name>
    </ligand>
</feature>
<feature type="binding site" evidence="1">
    <location>
        <position position="114"/>
    </location>
    <ligand>
        <name>substrate</name>
    </ligand>
</feature>
<feature type="binding site" description="axial binding residue" evidence="1">
    <location>
        <position position="237"/>
    </location>
    <ligand>
        <name>heme</name>
        <dbReference type="ChEBI" id="CHEBI:30413"/>
    </ligand>
    <ligandPart>
        <name>Fe</name>
        <dbReference type="ChEBI" id="CHEBI:18248"/>
    </ligandPart>
</feature>
<feature type="binding site" evidence="1">
    <location>
        <position position="251"/>
    </location>
    <ligand>
        <name>substrate</name>
    </ligand>
</feature>
<accession>Q1GEF8</accession>
<proteinExistence type="inferred from homology"/>
<protein>
    <recommendedName>
        <fullName evidence="1">Tryptophan 2,3-dioxygenase</fullName>
        <shortName evidence="1">TDO</shortName>
        <ecNumber evidence="1">1.13.11.11</ecNumber>
    </recommendedName>
    <alternativeName>
        <fullName evidence="1">Tryptamin 2,3-dioxygenase</fullName>
    </alternativeName>
    <alternativeName>
        <fullName evidence="1">Tryptophan oxygenase</fullName>
        <shortName evidence="1">TO</shortName>
        <shortName evidence="1">TRPO</shortName>
    </alternativeName>
    <alternativeName>
        <fullName evidence="1">Tryptophan pyrrolase</fullName>
    </alternativeName>
    <alternativeName>
        <fullName evidence="1">Tryptophanase</fullName>
    </alternativeName>
</protein>
<evidence type="ECO:0000255" key="1">
    <source>
        <dbReference type="HAMAP-Rule" id="MF_01972"/>
    </source>
</evidence>
<name>T23O_RUEST</name>
<comment type="function">
    <text evidence="1">Heme-dependent dioxygenase that catalyzes the oxidative cleavage of the L-tryptophan (L-Trp) pyrrole ring and converts L-tryptophan to N-formyl-L-kynurenine. Catalyzes the oxidative cleavage of the indole moiety.</text>
</comment>
<comment type="catalytic activity">
    <reaction evidence="1">
        <text>L-tryptophan + O2 = N-formyl-L-kynurenine</text>
        <dbReference type="Rhea" id="RHEA:24536"/>
        <dbReference type="ChEBI" id="CHEBI:15379"/>
        <dbReference type="ChEBI" id="CHEBI:57912"/>
        <dbReference type="ChEBI" id="CHEBI:58629"/>
        <dbReference type="EC" id="1.13.11.11"/>
    </reaction>
</comment>
<comment type="cofactor">
    <cofactor evidence="1">
        <name>heme</name>
        <dbReference type="ChEBI" id="CHEBI:30413"/>
    </cofactor>
    <text evidence="1">Binds 1 heme group per subunit.</text>
</comment>
<comment type="pathway">
    <text evidence="1">Amino-acid degradation; L-tryptophan degradation via kynurenine pathway; L-kynurenine from L-tryptophan: step 1/2.</text>
</comment>
<comment type="subunit">
    <text evidence="1">Homotetramer.</text>
</comment>
<comment type="similarity">
    <text evidence="1">Belongs to the tryptophan 2,3-dioxygenase family.</text>
</comment>
<sequence>MSDSAYNPGQDGAKMGFADAMSYGDYLHLDALLDQQHCKSDAHDEMLFIIQHQTSELWMKLALHELQAAREALQQGQTAEMFKMLARVSRIFEQLNSAWDVLRTMTPADYTRFREALGPSSGFQSYQYRLIEYVLGNRNPNMLRPHEHVPEVHALLSAELARPSFYDEVNRYLFQTLDGHTENLPAPRLDAPHALDETIQERWLKVYGDIDTYWTLYELAEKLVDLEDYFRRWRFNHVTTVERVIGFKRGTGGTSGVQYLRRMLSVELFPELWTLRGDL</sequence>
<reference key="1">
    <citation type="submission" date="2006-05" db="EMBL/GenBank/DDBJ databases">
        <title>Complete sequence of chromosome of Silicibacter sp. TM1040.</title>
        <authorList>
            <consortium name="US DOE Joint Genome Institute"/>
            <person name="Copeland A."/>
            <person name="Lucas S."/>
            <person name="Lapidus A."/>
            <person name="Barry K."/>
            <person name="Detter J.C."/>
            <person name="Glavina del Rio T."/>
            <person name="Hammon N."/>
            <person name="Israni S."/>
            <person name="Dalin E."/>
            <person name="Tice H."/>
            <person name="Pitluck S."/>
            <person name="Brettin T."/>
            <person name="Bruce D."/>
            <person name="Han C."/>
            <person name="Tapia R."/>
            <person name="Goodwin L."/>
            <person name="Thompson L.S."/>
            <person name="Gilna P."/>
            <person name="Schmutz J."/>
            <person name="Larimer F."/>
            <person name="Land M."/>
            <person name="Hauser L."/>
            <person name="Kyrpides N."/>
            <person name="Kim E."/>
            <person name="Belas R."/>
            <person name="Moran M.A."/>
            <person name="Buchan A."/>
            <person name="Gonzalez J.M."/>
            <person name="Schell M.A."/>
            <person name="Sun F."/>
            <person name="Richardson P."/>
        </authorList>
    </citation>
    <scope>NUCLEOTIDE SEQUENCE [LARGE SCALE GENOMIC DNA]</scope>
    <source>
        <strain>TM1040</strain>
    </source>
</reference>
<organism>
    <name type="scientific">Ruegeria sp. (strain TM1040)</name>
    <name type="common">Silicibacter sp.</name>
    <dbReference type="NCBI Taxonomy" id="292414"/>
    <lineage>
        <taxon>Bacteria</taxon>
        <taxon>Pseudomonadati</taxon>
        <taxon>Pseudomonadota</taxon>
        <taxon>Alphaproteobacteria</taxon>
        <taxon>Rhodobacterales</taxon>
        <taxon>Roseobacteraceae</taxon>
        <taxon>Ruegeria</taxon>
    </lineage>
</organism>
<keyword id="KW-0223">Dioxygenase</keyword>
<keyword id="KW-0349">Heme</keyword>
<keyword id="KW-0408">Iron</keyword>
<keyword id="KW-0479">Metal-binding</keyword>
<keyword id="KW-0560">Oxidoreductase</keyword>
<keyword id="KW-1185">Reference proteome</keyword>
<keyword id="KW-0823">Tryptophan catabolism</keyword>
<dbReference type="EC" id="1.13.11.11" evidence="1"/>
<dbReference type="EMBL" id="CP000377">
    <property type="protein sequence ID" value="ABF64958.1"/>
    <property type="molecule type" value="Genomic_DNA"/>
</dbReference>
<dbReference type="RefSeq" id="WP_011539547.1">
    <property type="nucleotide sequence ID" value="NC_008044.1"/>
</dbReference>
<dbReference type="SMR" id="Q1GEF8"/>
<dbReference type="STRING" id="292414.TM1040_2226"/>
<dbReference type="KEGG" id="sit:TM1040_2226"/>
<dbReference type="eggNOG" id="COG3483">
    <property type="taxonomic scope" value="Bacteria"/>
</dbReference>
<dbReference type="HOGENOM" id="CLU_063240_0_0_5"/>
<dbReference type="OrthoDB" id="9776847at2"/>
<dbReference type="UniPathway" id="UPA00333">
    <property type="reaction ID" value="UER00453"/>
</dbReference>
<dbReference type="Proteomes" id="UP000000636">
    <property type="component" value="Chromosome"/>
</dbReference>
<dbReference type="GO" id="GO:0020037">
    <property type="term" value="F:heme binding"/>
    <property type="evidence" value="ECO:0000250"/>
    <property type="project" value="UniProtKB"/>
</dbReference>
<dbReference type="GO" id="GO:0046872">
    <property type="term" value="F:metal ion binding"/>
    <property type="evidence" value="ECO:0007669"/>
    <property type="project" value="UniProtKB-KW"/>
</dbReference>
<dbReference type="GO" id="GO:0004833">
    <property type="term" value="F:tryptophan 2,3-dioxygenase activity"/>
    <property type="evidence" value="ECO:0000250"/>
    <property type="project" value="UniProtKB"/>
</dbReference>
<dbReference type="GO" id="GO:0019442">
    <property type="term" value="P:L-tryptophan catabolic process to acetyl-CoA"/>
    <property type="evidence" value="ECO:0007669"/>
    <property type="project" value="TreeGrafter"/>
</dbReference>
<dbReference type="GO" id="GO:0019441">
    <property type="term" value="P:L-tryptophan catabolic process to kynurenine"/>
    <property type="evidence" value="ECO:0000250"/>
    <property type="project" value="UniProtKB"/>
</dbReference>
<dbReference type="FunFam" id="1.20.58.480:FF:000001">
    <property type="entry name" value="Tryptophan 2,3-dioxygenase"/>
    <property type="match status" value="1"/>
</dbReference>
<dbReference type="Gene3D" id="1.20.58.480">
    <property type="match status" value="1"/>
</dbReference>
<dbReference type="HAMAP" id="MF_01972">
    <property type="entry name" value="T23O"/>
    <property type="match status" value="1"/>
</dbReference>
<dbReference type="InterPro" id="IPR037217">
    <property type="entry name" value="Trp/Indoleamine_2_3_dOase-like"/>
</dbReference>
<dbReference type="InterPro" id="IPR004981">
    <property type="entry name" value="Trp_2_3_dOase"/>
</dbReference>
<dbReference type="PANTHER" id="PTHR10138">
    <property type="entry name" value="TRYPTOPHAN 2,3-DIOXYGENASE"/>
    <property type="match status" value="1"/>
</dbReference>
<dbReference type="PANTHER" id="PTHR10138:SF0">
    <property type="entry name" value="TRYPTOPHAN 2,3-DIOXYGENASE"/>
    <property type="match status" value="1"/>
</dbReference>
<dbReference type="Pfam" id="PF03301">
    <property type="entry name" value="Trp_dioxygenase"/>
    <property type="match status" value="2"/>
</dbReference>
<dbReference type="SUPFAM" id="SSF140959">
    <property type="entry name" value="Indolic compounds 2,3-dioxygenase-like"/>
    <property type="match status" value="1"/>
</dbReference>